<sequence>MAFHSLLLLCLAGLAFVSETAAVHHEGEHSKCPLMVKVLDAVRGRPAVNVDVKVFKKTEEQTWELFAAGKTNDNGEIHELTTDDKFGEGLYKVEFDTISYWKALGVSPFHEYADVVFTANDAGHRHYTIAALLSPYSFSTTAIVSNPTE</sequence>
<comment type="function">
    <text evidence="1">Thyroid hormone-binding protein. Probably transports thyroxine from the bloodstream to the brain (By similarity).</text>
</comment>
<comment type="subunit">
    <text evidence="1">Homotetramer. Dimer of dimers. In the homotetramer, subunits assemble around a central channel that can accommodate two ligand molecules. Interacts with RBP4 (By similarity).</text>
</comment>
<comment type="subcellular location">
    <subcellularLocation>
        <location evidence="1">Secreted</location>
    </subcellularLocation>
</comment>
<comment type="PTM">
    <text evidence="2">Sulfonation of the reactive cysteine Cys-32 enhances the stability of the native conformation of TTR, avoiding misassembly of the protein leading to amyloid formation.</text>
</comment>
<comment type="similarity">
    <text evidence="4">Belongs to the transthyretin family.</text>
</comment>
<evidence type="ECO:0000250" key="1"/>
<evidence type="ECO:0000250" key="2">
    <source>
        <dbReference type="UniProtKB" id="P02766"/>
    </source>
</evidence>
<evidence type="ECO:0000255" key="3"/>
<evidence type="ECO:0000305" key="4"/>
<evidence type="ECO:0007829" key="5">
    <source>
        <dbReference type="PDB" id="7RLK"/>
    </source>
</evidence>
<name>TTHY_NOTEU</name>
<feature type="signal peptide" evidence="3">
    <location>
        <begin position="1"/>
        <end position="20"/>
    </location>
</feature>
<feature type="chain" id="PRO_0000035756" description="Transthyretin">
    <location>
        <begin position="21"/>
        <end position="149"/>
    </location>
</feature>
<feature type="binding site" evidence="2">
    <location>
        <position position="37"/>
    </location>
    <ligand>
        <name>L-thyroxine</name>
        <dbReference type="ChEBI" id="CHEBI:58448"/>
    </ligand>
</feature>
<feature type="binding site" evidence="2">
    <location>
        <position position="76"/>
    </location>
    <ligand>
        <name>L-thyroxine</name>
        <dbReference type="ChEBI" id="CHEBI:58448"/>
    </ligand>
</feature>
<feature type="binding site" evidence="2">
    <location>
        <position position="139"/>
    </location>
    <ligand>
        <name>L-thyroxine</name>
        <dbReference type="ChEBI" id="CHEBI:58448"/>
    </ligand>
</feature>
<feature type="modified residue" description="Sulfocysteine" evidence="2">
    <location>
        <position position="32"/>
    </location>
</feature>
<feature type="modified residue" description="4-carboxyglutamate" evidence="2">
    <location>
        <position position="64"/>
    </location>
</feature>
<feature type="strand" evidence="5">
    <location>
        <begin position="34"/>
        <end position="40"/>
    </location>
</feature>
<feature type="turn" evidence="5">
    <location>
        <begin position="41"/>
        <end position="44"/>
    </location>
</feature>
<feature type="strand" evidence="5">
    <location>
        <begin position="51"/>
        <end position="57"/>
    </location>
</feature>
<feature type="strand" evidence="5">
    <location>
        <begin position="63"/>
        <end position="70"/>
    </location>
</feature>
<feature type="turn" evidence="5">
    <location>
        <begin position="83"/>
        <end position="85"/>
    </location>
</feature>
<feature type="strand" evidence="5">
    <location>
        <begin position="88"/>
        <end position="95"/>
    </location>
</feature>
<feature type="helix" evidence="5">
    <location>
        <begin position="97"/>
        <end position="102"/>
    </location>
</feature>
<feature type="turn" evidence="5">
    <location>
        <begin position="103"/>
        <end position="105"/>
    </location>
</feature>
<feature type="strand" evidence="5">
    <location>
        <begin position="109"/>
        <end position="111"/>
    </location>
</feature>
<feature type="strand" evidence="5">
    <location>
        <begin position="113"/>
        <end position="123"/>
    </location>
</feature>
<feature type="strand" evidence="5">
    <location>
        <begin position="126"/>
        <end position="134"/>
    </location>
</feature>
<feature type="strand" evidence="5">
    <location>
        <begin position="137"/>
        <end position="145"/>
    </location>
</feature>
<organism>
    <name type="scientific">Notamacropus eugenii</name>
    <name type="common">Tammar wallaby</name>
    <name type="synonym">Macropus eugenii</name>
    <dbReference type="NCBI Taxonomy" id="9315"/>
    <lineage>
        <taxon>Eukaryota</taxon>
        <taxon>Metazoa</taxon>
        <taxon>Chordata</taxon>
        <taxon>Craniata</taxon>
        <taxon>Vertebrata</taxon>
        <taxon>Euteleostomi</taxon>
        <taxon>Mammalia</taxon>
        <taxon>Metatheria</taxon>
        <taxon>Diprotodontia</taxon>
        <taxon>Macropodidae</taxon>
        <taxon>Notamacropus</taxon>
    </lineage>
</organism>
<dbReference type="EMBL" id="L32590">
    <property type="protein sequence ID" value="AAA31608.1"/>
    <property type="molecule type" value="mRNA"/>
</dbReference>
<dbReference type="EMBL" id="X79113">
    <property type="protein sequence ID" value="CAA55729.1"/>
    <property type="molecule type" value="mRNA"/>
</dbReference>
<dbReference type="PIR" id="S44941">
    <property type="entry name" value="S44941"/>
</dbReference>
<dbReference type="PDB" id="7RLK">
    <property type="method" value="X-ray"/>
    <property type="resolution" value="2.69 A"/>
    <property type="chains" value="A/B/C/D/E/F=32-148"/>
</dbReference>
<dbReference type="PDBsum" id="7RLK"/>
<dbReference type="SMR" id="P42204"/>
<dbReference type="GO" id="GO:0005615">
    <property type="term" value="C:extracellular space"/>
    <property type="evidence" value="ECO:0007669"/>
    <property type="project" value="TreeGrafter"/>
</dbReference>
<dbReference type="GO" id="GO:0005179">
    <property type="term" value="F:hormone activity"/>
    <property type="evidence" value="ECO:0007669"/>
    <property type="project" value="UniProtKB-KW"/>
</dbReference>
<dbReference type="GO" id="GO:0070324">
    <property type="term" value="F:thyroid hormone binding"/>
    <property type="evidence" value="ECO:0007669"/>
    <property type="project" value="TreeGrafter"/>
</dbReference>
<dbReference type="GO" id="GO:0006144">
    <property type="term" value="P:purine nucleobase metabolic process"/>
    <property type="evidence" value="ECO:0007669"/>
    <property type="project" value="TreeGrafter"/>
</dbReference>
<dbReference type="FunFam" id="2.60.40.180:FF:000002">
    <property type="entry name" value="Transthyretin"/>
    <property type="match status" value="1"/>
</dbReference>
<dbReference type="Gene3D" id="2.60.40.180">
    <property type="entry name" value="Transthyretin/hydroxyisourate hydrolase domain"/>
    <property type="match status" value="1"/>
</dbReference>
<dbReference type="InterPro" id="IPR023418">
    <property type="entry name" value="Thyroxine_BS"/>
</dbReference>
<dbReference type="InterPro" id="IPR000895">
    <property type="entry name" value="Transthyretin/HIU_hydrolase"/>
</dbReference>
<dbReference type="InterPro" id="IPR023416">
    <property type="entry name" value="Transthyretin/HIU_hydrolase_d"/>
</dbReference>
<dbReference type="InterPro" id="IPR036817">
    <property type="entry name" value="Transthyretin/HIU_hydrolase_sf"/>
</dbReference>
<dbReference type="InterPro" id="IPR023419">
    <property type="entry name" value="Transthyretin_CS"/>
</dbReference>
<dbReference type="PANTHER" id="PTHR10395:SF12">
    <property type="entry name" value="TRANSTHYRETIN"/>
    <property type="match status" value="1"/>
</dbReference>
<dbReference type="PANTHER" id="PTHR10395">
    <property type="entry name" value="URICASE AND TRANSTHYRETIN-RELATED"/>
    <property type="match status" value="1"/>
</dbReference>
<dbReference type="Pfam" id="PF00576">
    <property type="entry name" value="Transthyretin"/>
    <property type="match status" value="1"/>
</dbReference>
<dbReference type="PRINTS" id="PR00189">
    <property type="entry name" value="TRNSTHYRETIN"/>
</dbReference>
<dbReference type="SMART" id="SM00095">
    <property type="entry name" value="TR_THY"/>
    <property type="match status" value="1"/>
</dbReference>
<dbReference type="SUPFAM" id="SSF49472">
    <property type="entry name" value="Transthyretin (synonym: prealbumin)"/>
    <property type="match status" value="1"/>
</dbReference>
<dbReference type="PROSITE" id="PS00768">
    <property type="entry name" value="TRANSTHYRETIN_1"/>
    <property type="match status" value="1"/>
</dbReference>
<dbReference type="PROSITE" id="PS00769">
    <property type="entry name" value="TRANSTHYRETIN_2"/>
    <property type="match status" value="1"/>
</dbReference>
<keyword id="KW-0002">3D-structure</keyword>
<keyword id="KW-0301">Gamma-carboxyglutamic acid</keyword>
<keyword id="KW-0372">Hormone</keyword>
<keyword id="KW-0964">Secreted</keyword>
<keyword id="KW-0732">Signal</keyword>
<keyword id="KW-0765">Sulfation</keyword>
<keyword id="KW-0795">Thyroid hormone</keyword>
<keyword id="KW-0813">Transport</keyword>
<gene>
    <name type="primary">TTR</name>
</gene>
<reference key="1">
    <citation type="journal article" date="1995" name="Comp. Biochem. Physiol.">
        <title>Wallaby transthyretin.</title>
        <authorList>
            <person name="Brack C.M."/>
            <person name="Duan W."/>
            <person name="Hulbert A.J."/>
            <person name="Schreiber G."/>
        </authorList>
    </citation>
    <scope>NUCLEOTIDE SEQUENCE [MRNA]</scope>
    <source>
        <tissue>Liver</tissue>
    </source>
</reference>
<protein>
    <recommendedName>
        <fullName>Transthyretin</fullName>
    </recommendedName>
    <alternativeName>
        <fullName>Prealbumin</fullName>
    </alternativeName>
</protein>
<accession>P42204</accession>
<proteinExistence type="evidence at protein level"/>